<organism>
    <name type="scientific">Staphylococcus aureus (strain MSSA476)</name>
    <dbReference type="NCBI Taxonomy" id="282459"/>
    <lineage>
        <taxon>Bacteria</taxon>
        <taxon>Bacillati</taxon>
        <taxon>Bacillota</taxon>
        <taxon>Bacilli</taxon>
        <taxon>Bacillales</taxon>
        <taxon>Staphylococcaceae</taxon>
        <taxon>Staphylococcus</taxon>
    </lineage>
</organism>
<protein>
    <recommendedName>
        <fullName>Uncharacterized lipoprotein SAS0073</fullName>
    </recommendedName>
</protein>
<sequence length="256" mass="29790">MIKRVNKLVLGISLLFLVISITAGCGMGKEAEIKKSFEKTLSMYPIKNLEDLYDKEGYRDDQFDKNDKGTWIVNSQMAIQNKGEALKIKGMLLKIDRNTRSAKGFYYTNEIKTEKYEVAQDNQKKYPVKMINNKFISTEEVKEENIKKEIENFKFFAQYSNFKDLMNYKDGDISYNPEVPSYSAQYQLTNDDYNVKQLRKRYDIPTNKAPKLLLKGTGNLKGSSVGYKKIEFTFLENKNENIYFTDSLHLKPSEDK</sequence>
<keyword id="KW-1003">Cell membrane</keyword>
<keyword id="KW-0449">Lipoprotein</keyword>
<keyword id="KW-0472">Membrane</keyword>
<keyword id="KW-0564">Palmitate</keyword>
<keyword id="KW-0732">Signal</keyword>
<accession>Q6GD26</accession>
<feature type="signal peptide" evidence="1">
    <location>
        <begin position="1"/>
        <end position="24"/>
    </location>
</feature>
<feature type="chain" id="PRO_0000282160" description="Uncharacterized lipoprotein SAS0073">
    <location>
        <begin position="25"/>
        <end position="256"/>
    </location>
</feature>
<feature type="lipid moiety-binding region" description="N-palmitoyl cysteine" evidence="1">
    <location>
        <position position="25"/>
    </location>
</feature>
<feature type="lipid moiety-binding region" description="S-diacylglycerol cysteine" evidence="1">
    <location>
        <position position="25"/>
    </location>
</feature>
<comment type="subcellular location">
    <subcellularLocation>
        <location evidence="1">Cell membrane</location>
        <topology evidence="1">Lipid-anchor</topology>
    </subcellularLocation>
</comment>
<comment type="similarity">
    <text evidence="2">Belongs to the staphylococcal tandem lipoprotein family.</text>
</comment>
<name>Y073_STAAS</name>
<dbReference type="EMBL" id="BX571857">
    <property type="protein sequence ID" value="CAG41840.1"/>
    <property type="molecule type" value="Genomic_DNA"/>
</dbReference>
<dbReference type="RefSeq" id="WP_000597213.1">
    <property type="nucleotide sequence ID" value="NC_002953.3"/>
</dbReference>
<dbReference type="SMR" id="Q6GD26"/>
<dbReference type="KEGG" id="sas:SAS0073"/>
<dbReference type="HOGENOM" id="CLU_071589_0_1_9"/>
<dbReference type="GO" id="GO:0005886">
    <property type="term" value="C:plasma membrane"/>
    <property type="evidence" value="ECO:0007669"/>
    <property type="project" value="UniProtKB-SubCell"/>
</dbReference>
<dbReference type="Gene3D" id="2.50.20.40">
    <property type="match status" value="1"/>
</dbReference>
<dbReference type="InterPro" id="IPR007595">
    <property type="entry name" value="Csa"/>
</dbReference>
<dbReference type="InterPro" id="IPR038641">
    <property type="entry name" value="Csa_sf"/>
</dbReference>
<dbReference type="NCBIfam" id="TIGR01742">
    <property type="entry name" value="SA_tandem_lipo"/>
    <property type="match status" value="1"/>
</dbReference>
<dbReference type="Pfam" id="PF04507">
    <property type="entry name" value="DUF576"/>
    <property type="match status" value="1"/>
</dbReference>
<dbReference type="PROSITE" id="PS51257">
    <property type="entry name" value="PROKAR_LIPOPROTEIN"/>
    <property type="match status" value="1"/>
</dbReference>
<evidence type="ECO:0000255" key="1">
    <source>
        <dbReference type="PROSITE-ProRule" id="PRU00303"/>
    </source>
</evidence>
<evidence type="ECO:0000305" key="2"/>
<gene>
    <name type="ordered locus">SAS0073</name>
</gene>
<proteinExistence type="inferred from homology"/>
<reference key="1">
    <citation type="journal article" date="2004" name="Proc. Natl. Acad. Sci. U.S.A.">
        <title>Complete genomes of two clinical Staphylococcus aureus strains: evidence for the rapid evolution of virulence and drug resistance.</title>
        <authorList>
            <person name="Holden M.T.G."/>
            <person name="Feil E.J."/>
            <person name="Lindsay J.A."/>
            <person name="Peacock S.J."/>
            <person name="Day N.P.J."/>
            <person name="Enright M.C."/>
            <person name="Foster T.J."/>
            <person name="Moore C.E."/>
            <person name="Hurst L."/>
            <person name="Atkin R."/>
            <person name="Barron A."/>
            <person name="Bason N."/>
            <person name="Bentley S.D."/>
            <person name="Chillingworth C."/>
            <person name="Chillingworth T."/>
            <person name="Churcher C."/>
            <person name="Clark L."/>
            <person name="Corton C."/>
            <person name="Cronin A."/>
            <person name="Doggett J."/>
            <person name="Dowd L."/>
            <person name="Feltwell T."/>
            <person name="Hance Z."/>
            <person name="Harris B."/>
            <person name="Hauser H."/>
            <person name="Holroyd S."/>
            <person name="Jagels K."/>
            <person name="James K.D."/>
            <person name="Lennard N."/>
            <person name="Line A."/>
            <person name="Mayes R."/>
            <person name="Moule S."/>
            <person name="Mungall K."/>
            <person name="Ormond D."/>
            <person name="Quail M.A."/>
            <person name="Rabbinowitsch E."/>
            <person name="Rutherford K.M."/>
            <person name="Sanders M."/>
            <person name="Sharp S."/>
            <person name="Simmonds M."/>
            <person name="Stevens K."/>
            <person name="Whitehead S."/>
            <person name="Barrell B.G."/>
            <person name="Spratt B.G."/>
            <person name="Parkhill J."/>
        </authorList>
    </citation>
    <scope>NUCLEOTIDE SEQUENCE [LARGE SCALE GENOMIC DNA]</scope>
    <source>
        <strain>MSSA476</strain>
    </source>
</reference>